<organism>
    <name type="scientific">Human herpesvirus 1 (strain 17)</name>
    <name type="common">HHV-1</name>
    <name type="synonym">Human herpes simplex virus 1</name>
    <dbReference type="NCBI Taxonomy" id="10299"/>
    <lineage>
        <taxon>Viruses</taxon>
        <taxon>Duplodnaviria</taxon>
        <taxon>Heunggongvirae</taxon>
        <taxon>Peploviricota</taxon>
        <taxon>Herviviricetes</taxon>
        <taxon>Herpesvirales</taxon>
        <taxon>Orthoherpesviridae</taxon>
        <taxon>Alphaherpesvirinae</taxon>
        <taxon>Simplexvirus</taxon>
        <taxon>Simplexvirus humanalpha1</taxon>
        <taxon>Human herpesvirus 1</taxon>
    </lineage>
</organism>
<gene>
    <name evidence="1" type="primary">RIR2</name>
    <name type="ORF">UL40</name>
</gene>
<sequence>MDSAAPALSPALTALTDQSATADLAIQIPKCPDPERYFYTSQCPDINHLRSLSILNRWLETELVFVGDEEDVSKLSEGELSFYRFLFAFLSAADDLVTENLGGLSGLFEQKDILHYYVEQECIEVVHSRVYNIIQLVLFHNNDQARREYVAGTINHPAIRAKVDWLEARVRECASVPEKFILMILIEGIFFAASFAAIAYLRTNNLLRVTCQSNDLISRDEAVHTTASCYIYNNYLGGHAKPPPDRVYGLFRQAVEIEIGFIRSQAPTDSHILSPAALAAIENYVRFSADRLLGLIHMKPLFSAPPPDASFPLSLMSTDKHTNFFECRSTSYAGAVVNDL</sequence>
<reference key="1">
    <citation type="journal article" date="1988" name="J. Gen. Virol.">
        <title>The complete DNA sequence of the long unique region in the genome of herpes simplex virus type 1.</title>
        <authorList>
            <person name="McGeoch D.J."/>
            <person name="Dalrymple M.A."/>
            <person name="Davison A.J."/>
            <person name="Dolan A."/>
            <person name="Frame M.C."/>
            <person name="McNab D."/>
            <person name="Perry L.J."/>
            <person name="Scott J.E."/>
            <person name="Taylor P."/>
        </authorList>
    </citation>
    <scope>NUCLEOTIDE SEQUENCE [LARGE SCALE GENOMIC DNA]</scope>
</reference>
<reference key="2">
    <citation type="journal article" date="2007" name="Microbes Infect.">
        <title>Determination and analysis of the DNA sequence of highly attenuated herpes simplex virus type 1 mutant HF10, a potential oncolytic virus.</title>
        <authorList>
            <person name="Ushijima Y."/>
            <person name="Luo C."/>
            <person name="Goshima F."/>
            <person name="Yamauchi Y."/>
            <person name="Kimura H."/>
            <person name="Nishiyama Y."/>
        </authorList>
    </citation>
    <scope>NUCLEOTIDE SEQUENCE [LARGE SCALE GENOMIC DNA]</scope>
    <source>
        <strain>Nonneuroinvasive mutant HF10</strain>
    </source>
</reference>
<reference key="3">
    <citation type="submission" date="2008-12" db="EMBL/GenBank/DDBJ databases">
        <title>Herpes simplex virus type 1 bacterial artificial chromosome.</title>
        <authorList>
            <person name="Cunningham C."/>
            <person name="Davison A.J."/>
        </authorList>
    </citation>
    <scope>NUCLEOTIDE SEQUENCE [LARGE SCALE GENOMIC DNA]</scope>
    <source>
        <strain>17 syn+</strain>
    </source>
</reference>
<reference key="4">
    <citation type="journal article" date="2009" name="Trends Biochem. Sci.">
        <title>Tinkering with a viral ribonucleotide reductase.</title>
        <authorList>
            <person name="Lembo D."/>
            <person name="Brune W."/>
        </authorList>
    </citation>
    <scope>REVIEW</scope>
</reference>
<name>RIR2_HHV11</name>
<comment type="function">
    <text evidence="1">Ribonucleoside-diphosphate reductase holoenzyme provides the precursors necessary for viral DNA synthesis. Allows virus growth in non-dividing cells, as well as reactivation from latency in infected hosts. Catalyzes the biosynthesis of deoxyribonucleotides from the corresponding ribonucleotides.</text>
</comment>
<comment type="catalytic activity">
    <reaction evidence="1">
        <text>a 2'-deoxyribonucleoside 5'-diphosphate + [thioredoxin]-disulfide + H2O = a ribonucleoside 5'-diphosphate + [thioredoxin]-dithiol</text>
        <dbReference type="Rhea" id="RHEA:23252"/>
        <dbReference type="Rhea" id="RHEA-COMP:10698"/>
        <dbReference type="Rhea" id="RHEA-COMP:10700"/>
        <dbReference type="ChEBI" id="CHEBI:15377"/>
        <dbReference type="ChEBI" id="CHEBI:29950"/>
        <dbReference type="ChEBI" id="CHEBI:50058"/>
        <dbReference type="ChEBI" id="CHEBI:57930"/>
        <dbReference type="ChEBI" id="CHEBI:73316"/>
        <dbReference type="EC" id="1.17.4.1"/>
    </reaction>
</comment>
<comment type="cofactor">
    <cofactor evidence="1">
        <name>Fe cation</name>
        <dbReference type="ChEBI" id="CHEBI:24875"/>
    </cofactor>
</comment>
<comment type="subunit">
    <text evidence="1">Heterotetramer composed of a homodimer of the large subunit (R1) and a homodimer of the small subunit (R2). Larger multisubunit protein complex are also active, composed of (R1)n(R2)n.</text>
</comment>
<comment type="subcellular location">
    <subcellularLocation>
        <location evidence="1">Host membrane</location>
        <topology evidence="1">Single-pass membrane protein</topology>
    </subcellularLocation>
</comment>
<comment type="similarity">
    <text evidence="1">Belongs to the ribonucleoside diphosphate reductase small chain family.</text>
</comment>
<organismHost>
    <name type="scientific">Homo sapiens</name>
    <name type="common">Human</name>
    <dbReference type="NCBI Taxonomy" id="9606"/>
</organismHost>
<accession>P10224</accession>
<accession>B9VQG8</accession>
<accession>Q09I93</accession>
<evidence type="ECO:0000255" key="1">
    <source>
        <dbReference type="HAMAP-Rule" id="MF_04028"/>
    </source>
</evidence>
<keyword id="KW-0235">DNA replication</keyword>
<keyword id="KW-1043">Host membrane</keyword>
<keyword id="KW-0408">Iron</keyword>
<keyword id="KW-0472">Membrane</keyword>
<keyword id="KW-0479">Metal-binding</keyword>
<keyword id="KW-0560">Oxidoreductase</keyword>
<keyword id="KW-1185">Reference proteome</keyword>
<keyword id="KW-0812">Transmembrane</keyword>
<keyword id="KW-1133">Transmembrane helix</keyword>
<keyword id="KW-1251">Viral latency</keyword>
<keyword id="KW-1272">Viral reactivation from latency</keyword>
<feature type="chain" id="PRO_0000190503" description="Ribonucleoside-diphosphate reductase small subunit">
    <location>
        <begin position="1"/>
        <end position="340"/>
    </location>
</feature>
<feature type="transmembrane region" description="Helical" evidence="1">
    <location>
        <begin position="180"/>
        <end position="200"/>
    </location>
</feature>
<feature type="sequence variant" description="In strain: Nonneuroinvasive mutant HF10.">
    <original>LTDQ</original>
    <variation>HTGH</variation>
    <location>
        <begin position="15"/>
        <end position="18"/>
    </location>
</feature>
<feature type="sequence variant" description="In strain: 17 syn+.">
    <original>D</original>
    <variation>G</variation>
    <location>
        <position position="17"/>
    </location>
</feature>
<protein>
    <recommendedName>
        <fullName evidence="1">Ribonucleoside-diphosphate reductase small subunit</fullName>
        <ecNumber evidence="1">1.17.4.1</ecNumber>
    </recommendedName>
    <alternativeName>
        <fullName evidence="1">Ribonucleotide reductase small subunit</fullName>
    </alternativeName>
</protein>
<dbReference type="EC" id="1.17.4.1" evidence="1"/>
<dbReference type="EMBL" id="X14112">
    <property type="protein sequence ID" value="CAA32303.1"/>
    <property type="molecule type" value="Genomic_DNA"/>
</dbReference>
<dbReference type="EMBL" id="DQ889502">
    <property type="protein sequence ID" value="ABI63502.1"/>
    <property type="molecule type" value="Genomic_DNA"/>
</dbReference>
<dbReference type="EMBL" id="FJ593289">
    <property type="protein sequence ID" value="ACM62263.1"/>
    <property type="molecule type" value="Genomic_DNA"/>
</dbReference>
<dbReference type="PIR" id="D30088">
    <property type="entry name" value="WMBES7"/>
</dbReference>
<dbReference type="RefSeq" id="YP_009137115.1">
    <property type="nucleotide sequence ID" value="NC_001806.2"/>
</dbReference>
<dbReference type="SMR" id="P10224"/>
<dbReference type="BioGRID" id="971407">
    <property type="interactions" value="3"/>
</dbReference>
<dbReference type="IntAct" id="P10224">
    <property type="interactions" value="2"/>
</dbReference>
<dbReference type="MINT" id="P10224"/>
<dbReference type="GeneID" id="24271470"/>
<dbReference type="KEGG" id="vg:24271470"/>
<dbReference type="Proteomes" id="UP000009294">
    <property type="component" value="Segment"/>
</dbReference>
<dbReference type="Proteomes" id="UP000180652">
    <property type="component" value="Segment"/>
</dbReference>
<dbReference type="GO" id="GO:0033644">
    <property type="term" value="C:host cell membrane"/>
    <property type="evidence" value="ECO:0007669"/>
    <property type="project" value="UniProtKB-SubCell"/>
</dbReference>
<dbReference type="GO" id="GO:0016020">
    <property type="term" value="C:membrane"/>
    <property type="evidence" value="ECO:0007669"/>
    <property type="project" value="UniProtKB-KW"/>
</dbReference>
<dbReference type="GO" id="GO:0046872">
    <property type="term" value="F:metal ion binding"/>
    <property type="evidence" value="ECO:0007669"/>
    <property type="project" value="UniProtKB-KW"/>
</dbReference>
<dbReference type="GO" id="GO:0004748">
    <property type="term" value="F:ribonucleoside-diphosphate reductase activity, thioredoxin disulfide as acceptor"/>
    <property type="evidence" value="ECO:0007669"/>
    <property type="project" value="UniProtKB-EC"/>
</dbReference>
<dbReference type="GO" id="GO:0009263">
    <property type="term" value="P:deoxyribonucleotide biosynthetic process"/>
    <property type="evidence" value="ECO:0007669"/>
    <property type="project" value="InterPro"/>
</dbReference>
<dbReference type="GO" id="GO:0006260">
    <property type="term" value="P:DNA replication"/>
    <property type="evidence" value="ECO:0007669"/>
    <property type="project" value="UniProtKB-KW"/>
</dbReference>
<dbReference type="GO" id="GO:0019046">
    <property type="term" value="P:release from viral latency"/>
    <property type="evidence" value="ECO:0007669"/>
    <property type="project" value="UniProtKB-KW"/>
</dbReference>
<dbReference type="CDD" id="cd01049">
    <property type="entry name" value="RNRR2"/>
    <property type="match status" value="1"/>
</dbReference>
<dbReference type="FunFam" id="1.10.620.20:FF:000021">
    <property type="entry name" value="Ribonucleoside-diphosphate reductase small subunit"/>
    <property type="match status" value="1"/>
</dbReference>
<dbReference type="Gene3D" id="1.10.620.20">
    <property type="entry name" value="Ribonucleotide Reductase, subunit A"/>
    <property type="match status" value="1"/>
</dbReference>
<dbReference type="HAMAP" id="MF_04028">
    <property type="entry name" value="HSV_RIR2"/>
    <property type="match status" value="1"/>
</dbReference>
<dbReference type="InterPro" id="IPR009078">
    <property type="entry name" value="Ferritin-like_SF"/>
</dbReference>
<dbReference type="InterPro" id="IPR034715">
    <property type="entry name" value="HSV_RIR2"/>
</dbReference>
<dbReference type="InterPro" id="IPR012348">
    <property type="entry name" value="RNR-like"/>
</dbReference>
<dbReference type="InterPro" id="IPR033909">
    <property type="entry name" value="RNR_small"/>
</dbReference>
<dbReference type="InterPro" id="IPR030475">
    <property type="entry name" value="RNR_small_AS"/>
</dbReference>
<dbReference type="InterPro" id="IPR000358">
    <property type="entry name" value="RNR_small_fam"/>
</dbReference>
<dbReference type="PANTHER" id="PTHR23409">
    <property type="entry name" value="RIBONUCLEOSIDE-DIPHOSPHATE REDUCTASE SMALL CHAIN"/>
    <property type="match status" value="1"/>
</dbReference>
<dbReference type="PANTHER" id="PTHR23409:SF18">
    <property type="entry name" value="RIBONUCLEOSIDE-DIPHOSPHATE REDUCTASE SUBUNIT M2"/>
    <property type="match status" value="1"/>
</dbReference>
<dbReference type="Pfam" id="PF00268">
    <property type="entry name" value="Ribonuc_red_sm"/>
    <property type="match status" value="1"/>
</dbReference>
<dbReference type="SUPFAM" id="SSF47240">
    <property type="entry name" value="Ferritin-like"/>
    <property type="match status" value="1"/>
</dbReference>
<dbReference type="PROSITE" id="PS00368">
    <property type="entry name" value="RIBORED_SMALL"/>
    <property type="match status" value="1"/>
</dbReference>
<proteinExistence type="inferred from homology"/>